<accession>Q10Y89</accession>
<comment type="function">
    <text evidence="1">Binds as a heterodimer with protein bS6 to the central domain of the 16S rRNA, where it helps stabilize the platform of the 30S subunit.</text>
</comment>
<comment type="subunit">
    <text evidence="1">Part of the 30S ribosomal subunit. Forms a tight heterodimer with protein bS6.</text>
</comment>
<comment type="similarity">
    <text evidence="1">Belongs to the bacterial ribosomal protein bS18 family.</text>
</comment>
<protein>
    <recommendedName>
        <fullName evidence="1">Small ribosomal subunit protein bS18</fullName>
    </recommendedName>
    <alternativeName>
        <fullName evidence="2">30S ribosomal protein S18</fullName>
    </alternativeName>
</protein>
<keyword id="KW-0687">Ribonucleoprotein</keyword>
<keyword id="KW-0689">Ribosomal protein</keyword>
<keyword id="KW-0694">RNA-binding</keyword>
<keyword id="KW-0699">rRNA-binding</keyword>
<dbReference type="EMBL" id="CP000393">
    <property type="protein sequence ID" value="ABG52785.1"/>
    <property type="molecule type" value="Genomic_DNA"/>
</dbReference>
<dbReference type="RefSeq" id="WP_011613116.1">
    <property type="nucleotide sequence ID" value="NC_008312.1"/>
</dbReference>
<dbReference type="SMR" id="Q10Y89"/>
<dbReference type="STRING" id="203124.Tery_3729"/>
<dbReference type="KEGG" id="ter:Tery_3729"/>
<dbReference type="eggNOG" id="COG0238">
    <property type="taxonomic scope" value="Bacteria"/>
</dbReference>
<dbReference type="HOGENOM" id="CLU_148710_2_3_3"/>
<dbReference type="OrthoDB" id="9812008at2"/>
<dbReference type="GO" id="GO:0022627">
    <property type="term" value="C:cytosolic small ribosomal subunit"/>
    <property type="evidence" value="ECO:0007669"/>
    <property type="project" value="TreeGrafter"/>
</dbReference>
<dbReference type="GO" id="GO:0070181">
    <property type="term" value="F:small ribosomal subunit rRNA binding"/>
    <property type="evidence" value="ECO:0007669"/>
    <property type="project" value="TreeGrafter"/>
</dbReference>
<dbReference type="GO" id="GO:0003735">
    <property type="term" value="F:structural constituent of ribosome"/>
    <property type="evidence" value="ECO:0007669"/>
    <property type="project" value="InterPro"/>
</dbReference>
<dbReference type="GO" id="GO:0006412">
    <property type="term" value="P:translation"/>
    <property type="evidence" value="ECO:0007669"/>
    <property type="project" value="UniProtKB-UniRule"/>
</dbReference>
<dbReference type="Gene3D" id="4.10.640.10">
    <property type="entry name" value="Ribosomal protein S18"/>
    <property type="match status" value="1"/>
</dbReference>
<dbReference type="HAMAP" id="MF_00270">
    <property type="entry name" value="Ribosomal_bS18"/>
    <property type="match status" value="1"/>
</dbReference>
<dbReference type="InterPro" id="IPR001648">
    <property type="entry name" value="Ribosomal_bS18"/>
</dbReference>
<dbReference type="InterPro" id="IPR018275">
    <property type="entry name" value="Ribosomal_bS18_CS"/>
</dbReference>
<dbReference type="InterPro" id="IPR036870">
    <property type="entry name" value="Ribosomal_bS18_sf"/>
</dbReference>
<dbReference type="NCBIfam" id="TIGR00165">
    <property type="entry name" value="S18"/>
    <property type="match status" value="1"/>
</dbReference>
<dbReference type="PANTHER" id="PTHR13479">
    <property type="entry name" value="30S RIBOSOMAL PROTEIN S18"/>
    <property type="match status" value="1"/>
</dbReference>
<dbReference type="PANTHER" id="PTHR13479:SF40">
    <property type="entry name" value="SMALL RIBOSOMAL SUBUNIT PROTEIN BS18M"/>
    <property type="match status" value="1"/>
</dbReference>
<dbReference type="Pfam" id="PF01084">
    <property type="entry name" value="Ribosomal_S18"/>
    <property type="match status" value="1"/>
</dbReference>
<dbReference type="PRINTS" id="PR00974">
    <property type="entry name" value="RIBOSOMALS18"/>
</dbReference>
<dbReference type="SUPFAM" id="SSF46911">
    <property type="entry name" value="Ribosomal protein S18"/>
    <property type="match status" value="1"/>
</dbReference>
<dbReference type="PROSITE" id="PS00057">
    <property type="entry name" value="RIBOSOMAL_S18"/>
    <property type="match status" value="1"/>
</dbReference>
<organism>
    <name type="scientific">Trichodesmium erythraeum (strain IMS101)</name>
    <dbReference type="NCBI Taxonomy" id="203124"/>
    <lineage>
        <taxon>Bacteria</taxon>
        <taxon>Bacillati</taxon>
        <taxon>Cyanobacteriota</taxon>
        <taxon>Cyanophyceae</taxon>
        <taxon>Oscillatoriophycideae</taxon>
        <taxon>Oscillatoriales</taxon>
        <taxon>Microcoleaceae</taxon>
        <taxon>Trichodesmium</taxon>
    </lineage>
</organism>
<reference key="1">
    <citation type="journal article" date="2015" name="Proc. Natl. Acad. Sci. U.S.A.">
        <title>Trichodesmium genome maintains abundant, widespread noncoding DNA in situ, despite oligotrophic lifestyle.</title>
        <authorList>
            <person name="Walworth N."/>
            <person name="Pfreundt U."/>
            <person name="Nelson W.C."/>
            <person name="Mincer T."/>
            <person name="Heidelberg J.F."/>
            <person name="Fu F."/>
            <person name="Waterbury J.B."/>
            <person name="Glavina del Rio T."/>
            <person name="Goodwin L."/>
            <person name="Kyrpides N.C."/>
            <person name="Land M.L."/>
            <person name="Woyke T."/>
            <person name="Hutchins D.A."/>
            <person name="Hess W.R."/>
            <person name="Webb E.A."/>
        </authorList>
    </citation>
    <scope>NUCLEOTIDE SEQUENCE [LARGE SCALE GENOMIC DNA]</scope>
    <source>
        <strain>IMS101</strain>
    </source>
</reference>
<gene>
    <name evidence="1" type="primary">rpsR</name>
    <name evidence="1" type="synonym">rps18</name>
    <name type="ordered locus">Tery_3729</name>
</gene>
<name>RS18_TRIEI</name>
<feature type="chain" id="PRO_0000345558" description="Small ribosomal subunit protein bS18">
    <location>
        <begin position="1"/>
        <end position="72"/>
    </location>
</feature>
<sequence>MANYYRKRVSPIKPGDPIDYKDVELLKKYITERGKIMPRRITGLTSKQQRDLTKSIKRARLVALLPYVNKES</sequence>
<evidence type="ECO:0000255" key="1">
    <source>
        <dbReference type="HAMAP-Rule" id="MF_00270"/>
    </source>
</evidence>
<evidence type="ECO:0000305" key="2"/>
<proteinExistence type="inferred from homology"/>